<reference key="1">
    <citation type="journal article" date="2001" name="Nature">
        <title>Genome sequence of enterohaemorrhagic Escherichia coli O157:H7.</title>
        <authorList>
            <person name="Perna N.T."/>
            <person name="Plunkett G. III"/>
            <person name="Burland V."/>
            <person name="Mau B."/>
            <person name="Glasner J.D."/>
            <person name="Rose D.J."/>
            <person name="Mayhew G.F."/>
            <person name="Evans P.S."/>
            <person name="Gregor J."/>
            <person name="Kirkpatrick H.A."/>
            <person name="Posfai G."/>
            <person name="Hackett J."/>
            <person name="Klink S."/>
            <person name="Boutin A."/>
            <person name="Shao Y."/>
            <person name="Miller L."/>
            <person name="Grotbeck E.J."/>
            <person name="Davis N.W."/>
            <person name="Lim A."/>
            <person name="Dimalanta E.T."/>
            <person name="Potamousis K."/>
            <person name="Apodaca J."/>
            <person name="Anantharaman T.S."/>
            <person name="Lin J."/>
            <person name="Yen G."/>
            <person name="Schwartz D.C."/>
            <person name="Welch R.A."/>
            <person name="Blattner F.R."/>
        </authorList>
    </citation>
    <scope>NUCLEOTIDE SEQUENCE [LARGE SCALE GENOMIC DNA]</scope>
    <source>
        <strain>O157:H7 / EDL933 / ATCC 700927 / EHEC</strain>
    </source>
</reference>
<reference key="2">
    <citation type="journal article" date="2001" name="DNA Res.">
        <title>Complete genome sequence of enterohemorrhagic Escherichia coli O157:H7 and genomic comparison with a laboratory strain K-12.</title>
        <authorList>
            <person name="Hayashi T."/>
            <person name="Makino K."/>
            <person name="Ohnishi M."/>
            <person name="Kurokawa K."/>
            <person name="Ishii K."/>
            <person name="Yokoyama K."/>
            <person name="Han C.-G."/>
            <person name="Ohtsubo E."/>
            <person name="Nakayama K."/>
            <person name="Murata T."/>
            <person name="Tanaka M."/>
            <person name="Tobe T."/>
            <person name="Iida T."/>
            <person name="Takami H."/>
            <person name="Honda T."/>
            <person name="Sasakawa C."/>
            <person name="Ogasawara N."/>
            <person name="Yasunaga T."/>
            <person name="Kuhara S."/>
            <person name="Shiba T."/>
            <person name="Hattori M."/>
            <person name="Shinagawa H."/>
        </authorList>
    </citation>
    <scope>NUCLEOTIDE SEQUENCE [LARGE SCALE GENOMIC DNA]</scope>
    <source>
        <strain>O157:H7 / Sakai / RIMD 0509952 / EHEC</strain>
    </source>
</reference>
<gene>
    <name type="primary">ycfH</name>
    <name type="ordered locus">Z1739</name>
    <name type="ordered locus">ECs1478</name>
</gene>
<feature type="chain" id="PRO_0000201996" description="Uncharacterized metal-dependent hydrolase YcfH">
    <location>
        <begin position="1"/>
        <end position="265"/>
    </location>
</feature>
<feature type="binding site" evidence="1">
    <location>
        <position position="7"/>
    </location>
    <ligand>
        <name>a divalent metal cation</name>
        <dbReference type="ChEBI" id="CHEBI:60240"/>
        <label>1</label>
    </ligand>
</feature>
<feature type="binding site" evidence="1">
    <location>
        <position position="9"/>
    </location>
    <ligand>
        <name>a divalent metal cation</name>
        <dbReference type="ChEBI" id="CHEBI:60240"/>
        <label>1</label>
    </ligand>
</feature>
<feature type="binding site" evidence="1">
    <location>
        <position position="94"/>
    </location>
    <ligand>
        <name>a divalent metal cation</name>
        <dbReference type="ChEBI" id="CHEBI:60240"/>
        <label>1</label>
    </ligand>
</feature>
<feature type="binding site" evidence="1">
    <location>
        <position position="94"/>
    </location>
    <ligand>
        <name>a divalent metal cation</name>
        <dbReference type="ChEBI" id="CHEBI:60240"/>
        <label>2</label>
    </ligand>
</feature>
<feature type="binding site" evidence="1">
    <location>
        <position position="130"/>
    </location>
    <ligand>
        <name>a divalent metal cation</name>
        <dbReference type="ChEBI" id="CHEBI:60240"/>
        <label>2</label>
    </ligand>
</feature>
<feature type="binding site" evidence="1">
    <location>
        <position position="155"/>
    </location>
    <ligand>
        <name>a divalent metal cation</name>
        <dbReference type="ChEBI" id="CHEBI:60240"/>
        <label>2</label>
    </ligand>
</feature>
<feature type="binding site" evidence="1">
    <location>
        <position position="205"/>
    </location>
    <ligand>
        <name>a divalent metal cation</name>
        <dbReference type="ChEBI" id="CHEBI:60240"/>
        <label>1</label>
    </ligand>
</feature>
<comment type="cofactor">
    <cofactor evidence="1">
        <name>a divalent metal cation</name>
        <dbReference type="ChEBI" id="CHEBI:60240"/>
    </cofactor>
    <text evidence="1">Binds 2 divalent metal cations per subunit.</text>
</comment>
<comment type="similarity">
    <text evidence="2">Belongs to the metallo-dependent hydrolases superfamily. TatD-type hydrolase family.</text>
</comment>
<evidence type="ECO:0000250" key="1">
    <source>
        <dbReference type="UniProtKB" id="P0AFQ7"/>
    </source>
</evidence>
<evidence type="ECO:0000305" key="2"/>
<dbReference type="EC" id="3.1.-.-" evidence="2"/>
<dbReference type="EMBL" id="AE005174">
    <property type="protein sequence ID" value="AAG55846.1"/>
    <property type="molecule type" value="Genomic_DNA"/>
</dbReference>
<dbReference type="EMBL" id="BA000007">
    <property type="protein sequence ID" value="BAB34901.1"/>
    <property type="molecule type" value="Genomic_DNA"/>
</dbReference>
<dbReference type="PIR" id="B85673">
    <property type="entry name" value="B85673"/>
</dbReference>
<dbReference type="PIR" id="F90813">
    <property type="entry name" value="F90813"/>
</dbReference>
<dbReference type="RefSeq" id="NP_309505.1">
    <property type="nucleotide sequence ID" value="NC_002695.1"/>
</dbReference>
<dbReference type="RefSeq" id="WP_000480245.1">
    <property type="nucleotide sequence ID" value="NZ_VOAI01000018.1"/>
</dbReference>
<dbReference type="SMR" id="P0AFQ9"/>
<dbReference type="STRING" id="155864.Z1739"/>
<dbReference type="GeneID" id="913835"/>
<dbReference type="KEGG" id="ece:Z1739"/>
<dbReference type="KEGG" id="ecs:ECs_1478"/>
<dbReference type="PATRIC" id="fig|386585.9.peg.1578"/>
<dbReference type="eggNOG" id="COG0084">
    <property type="taxonomic scope" value="Bacteria"/>
</dbReference>
<dbReference type="HOGENOM" id="CLU_031506_4_0_6"/>
<dbReference type="OMA" id="DGPYEYR"/>
<dbReference type="Proteomes" id="UP000000558">
    <property type="component" value="Chromosome"/>
</dbReference>
<dbReference type="Proteomes" id="UP000002519">
    <property type="component" value="Chromosome"/>
</dbReference>
<dbReference type="GO" id="GO:0005829">
    <property type="term" value="C:cytosol"/>
    <property type="evidence" value="ECO:0007669"/>
    <property type="project" value="TreeGrafter"/>
</dbReference>
<dbReference type="GO" id="GO:0004536">
    <property type="term" value="F:DNA nuclease activity"/>
    <property type="evidence" value="ECO:0007669"/>
    <property type="project" value="InterPro"/>
</dbReference>
<dbReference type="GO" id="GO:0046872">
    <property type="term" value="F:metal ion binding"/>
    <property type="evidence" value="ECO:0007669"/>
    <property type="project" value="UniProtKB-KW"/>
</dbReference>
<dbReference type="CDD" id="cd01310">
    <property type="entry name" value="TatD_DNAse"/>
    <property type="match status" value="1"/>
</dbReference>
<dbReference type="FunFam" id="3.20.20.140:FF:000005">
    <property type="entry name" value="TatD family hydrolase"/>
    <property type="match status" value="1"/>
</dbReference>
<dbReference type="Gene3D" id="3.20.20.140">
    <property type="entry name" value="Metal-dependent hydrolases"/>
    <property type="match status" value="1"/>
</dbReference>
<dbReference type="InterPro" id="IPR018228">
    <property type="entry name" value="DNase_TatD-rel_CS"/>
</dbReference>
<dbReference type="InterPro" id="IPR032466">
    <property type="entry name" value="Metal_Hydrolase"/>
</dbReference>
<dbReference type="InterPro" id="IPR001130">
    <property type="entry name" value="TatD-like"/>
</dbReference>
<dbReference type="InterPro" id="IPR015991">
    <property type="entry name" value="TatD/YcfH-like"/>
</dbReference>
<dbReference type="NCBIfam" id="NF008075">
    <property type="entry name" value="PRK10812.1"/>
    <property type="match status" value="1"/>
</dbReference>
<dbReference type="NCBIfam" id="TIGR00010">
    <property type="entry name" value="YchF/TatD family DNA exonuclease"/>
    <property type="match status" value="1"/>
</dbReference>
<dbReference type="PANTHER" id="PTHR46124">
    <property type="entry name" value="D-AMINOACYL-TRNA DEACYLASE"/>
    <property type="match status" value="1"/>
</dbReference>
<dbReference type="PANTHER" id="PTHR46124:SF2">
    <property type="entry name" value="D-AMINOACYL-TRNA DEACYLASE"/>
    <property type="match status" value="1"/>
</dbReference>
<dbReference type="Pfam" id="PF01026">
    <property type="entry name" value="TatD_DNase"/>
    <property type="match status" value="1"/>
</dbReference>
<dbReference type="PIRSF" id="PIRSF005902">
    <property type="entry name" value="DNase_TatD"/>
    <property type="match status" value="1"/>
</dbReference>
<dbReference type="SUPFAM" id="SSF51556">
    <property type="entry name" value="Metallo-dependent hydrolases"/>
    <property type="match status" value="1"/>
</dbReference>
<dbReference type="PROSITE" id="PS01137">
    <property type="entry name" value="TATD_1"/>
    <property type="match status" value="1"/>
</dbReference>
<dbReference type="PROSITE" id="PS01091">
    <property type="entry name" value="TATD_3"/>
    <property type="match status" value="1"/>
</dbReference>
<accession>P0AFQ9</accession>
<accession>P37346</accession>
<accession>P78057</accession>
<sequence>MFLVDSHCHLDGLDYESLHKDVDDVLAKAAARDVKFCLAVATTLPGYLHMRDLVGERDNVVFSCGVHPLNQNDPYDVEDLRRLAAEEGVVALGETGLDYYYTPETKVRQQESFIHHIQIGRELNKPVIVHTRDARADTLAILREEKVTDCGGVLHCFTEDRETAGKLLDLGFYISFSGIVTFRNAEQLRDAARYVPLDRLLVETDSPYLAPVPHRGKENQPAMVRDVAEYMAVLKGVAVEELAQVTTDNFARLFHIDASRLQSIR</sequence>
<protein>
    <recommendedName>
        <fullName evidence="2">Uncharacterized metal-dependent hydrolase YcfH</fullName>
        <ecNumber evidence="2">3.1.-.-</ecNumber>
    </recommendedName>
</protein>
<proteinExistence type="inferred from homology"/>
<organism>
    <name type="scientific">Escherichia coli O157:H7</name>
    <dbReference type="NCBI Taxonomy" id="83334"/>
    <lineage>
        <taxon>Bacteria</taxon>
        <taxon>Pseudomonadati</taxon>
        <taxon>Pseudomonadota</taxon>
        <taxon>Gammaproteobacteria</taxon>
        <taxon>Enterobacterales</taxon>
        <taxon>Enterobacteriaceae</taxon>
        <taxon>Escherichia</taxon>
    </lineage>
</organism>
<keyword id="KW-0378">Hydrolase</keyword>
<keyword id="KW-0479">Metal-binding</keyword>
<keyword id="KW-1185">Reference proteome</keyword>
<name>YCFH_ECO57</name>